<keyword id="KW-1157">Cap snatching</keyword>
<keyword id="KW-0255">Endonuclease</keyword>
<keyword id="KW-1262">Eukaryotic host gene expression shutoff by virus</keyword>
<keyword id="KW-1191">Eukaryotic host transcription shutoff by virus</keyword>
<keyword id="KW-1035">Host cytoplasm</keyword>
<keyword id="KW-1190">Host gene expression shutoff by virus</keyword>
<keyword id="KW-1048">Host nucleus</keyword>
<keyword id="KW-0945">Host-virus interaction</keyword>
<keyword id="KW-0378">Hydrolase</keyword>
<keyword id="KW-1104">Inhibition of host RNA polymerase II by virus</keyword>
<keyword id="KW-0464">Manganese</keyword>
<keyword id="KW-0479">Metal-binding</keyword>
<keyword id="KW-0540">Nuclease</keyword>
<keyword id="KW-0597">Phosphoprotein</keyword>
<keyword id="KW-0688">Ribosomal frameshifting</keyword>
<dbReference type="EC" id="3.1.-.-" evidence="2"/>
<dbReference type="EMBL" id="CY013276">
    <property type="protein sequence ID" value="ABI20833.1"/>
    <property type="molecule type" value="Other_RNA"/>
</dbReference>
<dbReference type="SMR" id="Q0HD53"/>
<dbReference type="MEROPS" id="S62.001"/>
<dbReference type="Proteomes" id="UP000156248">
    <property type="component" value="Genome"/>
</dbReference>
<dbReference type="GO" id="GO:0030430">
    <property type="term" value="C:host cell cytoplasm"/>
    <property type="evidence" value="ECO:0007669"/>
    <property type="project" value="UniProtKB-SubCell"/>
</dbReference>
<dbReference type="GO" id="GO:0042025">
    <property type="term" value="C:host cell nucleus"/>
    <property type="evidence" value="ECO:0007669"/>
    <property type="project" value="UniProtKB-SubCell"/>
</dbReference>
<dbReference type="GO" id="GO:0004519">
    <property type="term" value="F:endonuclease activity"/>
    <property type="evidence" value="ECO:0007669"/>
    <property type="project" value="UniProtKB-KW"/>
</dbReference>
<dbReference type="GO" id="GO:0046872">
    <property type="term" value="F:metal ion binding"/>
    <property type="evidence" value="ECO:0007669"/>
    <property type="project" value="UniProtKB-KW"/>
</dbReference>
<dbReference type="GO" id="GO:0003723">
    <property type="term" value="F:RNA binding"/>
    <property type="evidence" value="ECO:0007669"/>
    <property type="project" value="UniProtKB-UniRule"/>
</dbReference>
<dbReference type="GO" id="GO:0075526">
    <property type="term" value="P:cap snatching"/>
    <property type="evidence" value="ECO:0007669"/>
    <property type="project" value="UniProtKB-UniRule"/>
</dbReference>
<dbReference type="GO" id="GO:0006351">
    <property type="term" value="P:DNA-templated transcription"/>
    <property type="evidence" value="ECO:0007669"/>
    <property type="project" value="UniProtKB-UniRule"/>
</dbReference>
<dbReference type="GO" id="GO:0039657">
    <property type="term" value="P:symbiont-mediated suppression of host gene expression"/>
    <property type="evidence" value="ECO:0007669"/>
    <property type="project" value="UniProtKB-KW"/>
</dbReference>
<dbReference type="GO" id="GO:0039523">
    <property type="term" value="P:symbiont-mediated suppression of host mRNA transcription via inhibition of RNA polymerase II activity"/>
    <property type="evidence" value="ECO:0007669"/>
    <property type="project" value="UniProtKB-UniRule"/>
</dbReference>
<dbReference type="GO" id="GO:0039694">
    <property type="term" value="P:viral RNA genome replication"/>
    <property type="evidence" value="ECO:0007669"/>
    <property type="project" value="InterPro"/>
</dbReference>
<dbReference type="GO" id="GO:0075523">
    <property type="term" value="P:viral translational frameshifting"/>
    <property type="evidence" value="ECO:0007669"/>
    <property type="project" value="UniProtKB-KW"/>
</dbReference>
<dbReference type="FunFam" id="3.40.91.90:FF:000001">
    <property type="entry name" value="Polymerase acidic protein"/>
    <property type="match status" value="1"/>
</dbReference>
<dbReference type="Gene3D" id="3.40.91.90">
    <property type="entry name" value="Influenza RNA-dependent RNA polymerase subunit PA, endonuclease domain"/>
    <property type="match status" value="1"/>
</dbReference>
<dbReference type="HAMAP" id="MF_04063">
    <property type="entry name" value="INFV_PA"/>
    <property type="match status" value="1"/>
</dbReference>
<dbReference type="InterPro" id="IPR037534">
    <property type="entry name" value="INFV_PA"/>
</dbReference>
<dbReference type="InterPro" id="IPR001009">
    <property type="entry name" value="PA/PA-X"/>
</dbReference>
<dbReference type="InterPro" id="IPR038372">
    <property type="entry name" value="PA/PA-X_sf"/>
</dbReference>
<dbReference type="Pfam" id="PF00603">
    <property type="entry name" value="Flu_PA"/>
    <property type="match status" value="1"/>
</dbReference>
<organismHost>
    <name type="scientific">Aves</name>
    <dbReference type="NCBI Taxonomy" id="8782"/>
</organismHost>
<organismHost>
    <name type="scientific">Homo sapiens</name>
    <name type="common">Human</name>
    <dbReference type="NCBI Taxonomy" id="9606"/>
</organismHost>
<organismHost>
    <name type="scientific">Sus scrofa</name>
    <name type="common">Pig</name>
    <dbReference type="NCBI Taxonomy" id="9823"/>
</organismHost>
<feature type="chain" id="PRO_0000372998" description="Polymerase acidic protein">
    <location>
        <begin position="1"/>
        <end position="716"/>
    </location>
</feature>
<feature type="short sequence motif" description="Nuclear localization signal 1 (NLS1)" evidence="1 2">
    <location>
        <begin position="124"/>
        <end position="139"/>
    </location>
</feature>
<feature type="short sequence motif" description="Nuclear localization signal 2 (NLS2)" evidence="1 2">
    <location>
        <begin position="184"/>
        <end position="247"/>
    </location>
</feature>
<feature type="binding site" evidence="2">
    <location>
        <position position="41"/>
    </location>
    <ligand>
        <name>Mn(2+)</name>
        <dbReference type="ChEBI" id="CHEBI:29035"/>
        <label>1</label>
    </ligand>
</feature>
<feature type="binding site" evidence="2">
    <location>
        <position position="80"/>
    </location>
    <ligand>
        <name>Mn(2+)</name>
        <dbReference type="ChEBI" id="CHEBI:29035"/>
        <label>2</label>
    </ligand>
</feature>
<feature type="binding site" evidence="2">
    <location>
        <position position="108"/>
    </location>
    <ligand>
        <name>Mn(2+)</name>
        <dbReference type="ChEBI" id="CHEBI:29035"/>
        <label>1</label>
    </ligand>
</feature>
<feature type="binding site" evidence="2">
    <location>
        <position position="108"/>
    </location>
    <ligand>
        <name>Mn(2+)</name>
        <dbReference type="ChEBI" id="CHEBI:29035"/>
        <label>2</label>
    </ligand>
</feature>
<feature type="binding site" evidence="2">
    <location>
        <position position="119"/>
    </location>
    <ligand>
        <name>Mn(2+)</name>
        <dbReference type="ChEBI" id="CHEBI:29035"/>
        <label>1</label>
    </ligand>
</feature>
<feature type="binding site" evidence="2">
    <location>
        <position position="120"/>
    </location>
    <ligand>
        <name>Mn(2+)</name>
        <dbReference type="ChEBI" id="CHEBI:29035"/>
        <label>1</label>
    </ligand>
</feature>
<gene>
    <name evidence="2" type="primary">PA</name>
</gene>
<accession>Q0HD53</accession>
<proteinExistence type="inferred from homology"/>
<organism>
    <name type="scientific">Influenza A virus (strain A/Hickox/1940 H1N1)</name>
    <dbReference type="NCBI Taxonomy" id="383543"/>
    <lineage>
        <taxon>Viruses</taxon>
        <taxon>Riboviria</taxon>
        <taxon>Orthornavirae</taxon>
        <taxon>Negarnaviricota</taxon>
        <taxon>Polyploviricotina</taxon>
        <taxon>Insthoviricetes</taxon>
        <taxon>Articulavirales</taxon>
        <taxon>Orthomyxoviridae</taxon>
        <taxon>Alphainfluenzavirus</taxon>
        <taxon>Alphainfluenzavirus influenzae</taxon>
        <taxon>Influenza A virus</taxon>
    </lineage>
</organism>
<comment type="function">
    <text evidence="2">Plays an essential role in viral RNA transcription and replication by forming the heterotrimeric polymerase complex together with PB1 and PB2 subunits. The complex transcribes viral mRNAs by using a unique mechanism called cap-snatching. It consists in the hijacking and cleavage of host capped pre-mRNAs. These short capped RNAs are then used as primers for viral mRNAs. The PB2 subunit is responsible for the binding of the 5' cap of cellular pre-mRNAs which are subsequently cleaved after 10-13 nucleotides by the PA subunit that carries the endonuclease activity.</text>
</comment>
<comment type="cofactor">
    <cofactor evidence="2">
        <name>Mn(2+)</name>
        <dbReference type="ChEBI" id="CHEBI:29035"/>
    </cofactor>
    <text evidence="2">Binds 2 manganese ions per subunit.</text>
</comment>
<comment type="subunit">
    <text evidence="1 2">Influenza RNA polymerase is composed of three subunits: PB1, PB2 and PA. Interacts (via C-terminus) with PB1 (via N-terminus).</text>
</comment>
<comment type="subcellular location">
    <subcellularLocation>
        <location evidence="2">Host cytoplasm</location>
    </subcellularLocation>
    <subcellularLocation>
        <location evidence="2">Host nucleus</location>
    </subcellularLocation>
    <text evidence="1 2">PB1 and PA are transported in the host nucleus as a complex.</text>
</comment>
<comment type="alternative products">
    <event type="ribosomal frameshifting"/>
    <isoform>
        <id>Q0HD53-1</id>
        <name>PA</name>
        <sequence type="displayed"/>
    </isoform>
    <isoform>
        <id>P0DJR6-1</id>
        <name>PA-X</name>
        <sequence type="external"/>
    </isoform>
</comment>
<comment type="PTM">
    <text evidence="1 2">Phosphorylated on serines and threonines by host kinases, including human casein kinase II.</text>
</comment>
<comment type="similarity">
    <text evidence="2">Belongs to the influenza viruses PA family.</text>
</comment>
<protein>
    <recommendedName>
        <fullName evidence="2">Polymerase acidic protein</fullName>
        <ecNumber evidence="2">3.1.-.-</ecNumber>
    </recommendedName>
    <alternativeName>
        <fullName evidence="2">RNA-directed RNA polymerase subunit P2</fullName>
    </alternativeName>
</protein>
<name>PA_I40A0</name>
<sequence>MEDFVRQCFNPMIVELAEKAMKEYGEDPKIETNKLAAICTHLEVCFMYSDFHFINEQGESIIVELGDPNALLKHRFEIIEGRDRTMAWTVVNSICNTTGAEKPKFLPDLYDYKENRFIEIGVTRREVHIYYLEKANKIKSEKTHIHIFSFTGEEMATKADYTLDEESRARIKTRLFTIRQEMASRGLWDSFRQSERGEETIEEKFEITGTMRKLADQSLPPNFSCLENFRAYVDGFEPNGYIEGKLSQMSKEVNARIEPFFKTTPRPIRLPDGPPCSQRSKFLLMDALKLSIEDPSHEGEGIPLYDAIKCMRTFFGWKEPYVVKPHEKGINPNYLLSWKQVLAELQDIENEEKIPKTKNMKKTSQLKWALGENMAPEKVDFDDCKDVSDLKQYYSDEPELRSLSSWIQNEFNKACELTDSVWIELDEIGEDVAPIEHIASMRRNYFTAEVSHCRATEYIMKGVYINTALLNASCAAMDDFQLIPMISKCRTKEGRRKTNLYGFIIKGRSHLRNDTDVVNFVSMEFSLTDPRLEPHKWEKYCVLEIGDMLLRSAIGQVSRPMFLYVRTNGTSKIKMKWGMEMRRCLLQSLQQIESMIEAESSVKEKDMTKEFFENKSETWPIGESPKGVEEGSIGKVCRTLLAKSVFNSLYASPQLEGFSAESRKLLLIVQALRDNLEPGTFDLGGLYEAVEECLINDPWVLLNASWFNSFLTHALR</sequence>
<reference key="1">
    <citation type="submission" date="2006-08" db="EMBL/GenBank/DDBJ databases">
        <title>The NIAID influenza genome sequencing project.</title>
        <authorList>
            <person name="Spiro D."/>
            <person name="Ghedin E."/>
            <person name="Sengamalay N."/>
            <person name="Halpin R."/>
            <person name="Boyne A."/>
            <person name="Zaborsky J."/>
            <person name="Feldblyum T."/>
            <person name="Subbu V."/>
            <person name="Sparenborg J."/>
            <person name="Shumway M."/>
            <person name="Sitz J."/>
            <person name="Katzel D."/>
            <person name="Koo H."/>
            <person name="Salzberg S.L."/>
            <person name="Griesemer S."/>
            <person name="St George K."/>
            <person name="Bennett R."/>
            <person name="Taylor J."/>
            <person name="Bennink J.R."/>
            <person name="Yewdell J.W."/>
            <person name="Bao Y."/>
            <person name="Bolotov P."/>
            <person name="Dernovoy D."/>
            <person name="Kiryutin B."/>
            <person name="Lipman D.J."/>
            <person name="Tatusova T."/>
        </authorList>
    </citation>
    <scope>NUCLEOTIDE SEQUENCE [GENOMIC RNA]</scope>
</reference>
<reference key="2">
    <citation type="submission" date="2006-09" db="EMBL/GenBank/DDBJ databases">
        <authorList>
            <consortium name="The NIAID Influenza Genome Sequencing Consortium"/>
        </authorList>
    </citation>
    <scope>NUCLEOTIDE SEQUENCE [GENOMIC RNA]</scope>
</reference>
<evidence type="ECO:0000250" key="1">
    <source>
        <dbReference type="UniProtKB" id="P03433"/>
    </source>
</evidence>
<evidence type="ECO:0000255" key="2">
    <source>
        <dbReference type="HAMAP-Rule" id="MF_04063"/>
    </source>
</evidence>